<accession>A3LQZ8</accession>
<reference key="1">
    <citation type="journal article" date="2007" name="Nat. Biotechnol.">
        <title>Genome sequence of the lignocellulose-bioconverting and xylose-fermenting yeast Pichia stipitis.</title>
        <authorList>
            <person name="Jeffries T.W."/>
            <person name="Grigoriev I.V."/>
            <person name="Grimwood J."/>
            <person name="Laplaza J.M."/>
            <person name="Aerts A."/>
            <person name="Salamov A."/>
            <person name="Schmutz J."/>
            <person name="Lindquist E."/>
            <person name="Dehal P."/>
            <person name="Shapiro H."/>
            <person name="Jin Y.-S."/>
            <person name="Passoth V."/>
            <person name="Richardson P.M."/>
        </authorList>
    </citation>
    <scope>NUCLEOTIDE SEQUENCE [LARGE SCALE GENOMIC DNA]</scope>
    <source>
        <strain>ATCC 58785 / CBS 6054 / NBRC 10063 / NRRL Y-11545</strain>
    </source>
</reference>
<feature type="chain" id="PRO_0000324870" description="Fe-S cluster assembly protein DRE2">
    <location>
        <begin position="1"/>
        <end position="359"/>
    </location>
</feature>
<feature type="region of interest" description="N-terminal SAM-like domain" evidence="1">
    <location>
        <begin position="1"/>
        <end position="159"/>
    </location>
</feature>
<feature type="region of interest" description="Disordered" evidence="2">
    <location>
        <begin position="152"/>
        <end position="187"/>
    </location>
</feature>
<feature type="region of interest" description="Linker" evidence="1">
    <location>
        <begin position="159"/>
        <end position="228"/>
    </location>
</feature>
<feature type="region of interest" description="Fe-S binding site A" evidence="1">
    <location>
        <begin position="240"/>
        <end position="257"/>
    </location>
</feature>
<feature type="region of interest" description="Fe-S binding site B" evidence="1">
    <location>
        <begin position="322"/>
        <end position="336"/>
    </location>
</feature>
<feature type="short sequence motif" description="Cx2C motif 1" evidence="1">
    <location>
        <begin position="322"/>
        <end position="325"/>
    </location>
</feature>
<feature type="short sequence motif" description="Cx2C motif 2" evidence="1">
    <location>
        <begin position="333"/>
        <end position="336"/>
    </location>
</feature>
<feature type="compositionally biased region" description="Low complexity" evidence="2">
    <location>
        <begin position="155"/>
        <end position="166"/>
    </location>
</feature>
<feature type="compositionally biased region" description="Polar residues" evidence="2">
    <location>
        <begin position="167"/>
        <end position="177"/>
    </location>
</feature>
<feature type="binding site" evidence="1">
    <location>
        <position position="240"/>
    </location>
    <ligand>
        <name>[2Fe-2S] cluster</name>
        <dbReference type="ChEBI" id="CHEBI:190135"/>
    </ligand>
</feature>
<feature type="binding site" evidence="1">
    <location>
        <position position="252"/>
    </location>
    <ligand>
        <name>[2Fe-2S] cluster</name>
        <dbReference type="ChEBI" id="CHEBI:190135"/>
    </ligand>
</feature>
<feature type="binding site" evidence="1">
    <location>
        <position position="255"/>
    </location>
    <ligand>
        <name>[2Fe-2S] cluster</name>
        <dbReference type="ChEBI" id="CHEBI:190135"/>
    </ligand>
</feature>
<feature type="binding site" evidence="1">
    <location>
        <position position="257"/>
    </location>
    <ligand>
        <name>[2Fe-2S] cluster</name>
        <dbReference type="ChEBI" id="CHEBI:190135"/>
    </ligand>
</feature>
<feature type="binding site" evidence="1">
    <location>
        <position position="322"/>
    </location>
    <ligand>
        <name>[4Fe-4S] cluster</name>
        <dbReference type="ChEBI" id="CHEBI:49883"/>
    </ligand>
</feature>
<feature type="binding site" evidence="1">
    <location>
        <position position="325"/>
    </location>
    <ligand>
        <name>[4Fe-4S] cluster</name>
        <dbReference type="ChEBI" id="CHEBI:49883"/>
    </ligand>
</feature>
<feature type="binding site" evidence="1">
    <location>
        <position position="333"/>
    </location>
    <ligand>
        <name>[4Fe-4S] cluster</name>
        <dbReference type="ChEBI" id="CHEBI:49883"/>
    </ligand>
</feature>
<feature type="binding site" evidence="1">
    <location>
        <position position="336"/>
    </location>
    <ligand>
        <name>[4Fe-4S] cluster</name>
        <dbReference type="ChEBI" id="CHEBI:49883"/>
    </ligand>
</feature>
<proteinExistence type="inferred from homology"/>
<sequence>MANILLLLHPTVVTDQHLVENVKADIRKSVGDAHVEQHIIDRVTRGEVELTRNTYDKIIYINPNVHNRSIPASLMKLVYETLIDEGEFSGDLPTDQALDVLMTGFIVSDTNDQCWIKPKPIESVSIPLRRKGKKTDASVSASSGTTALPLFKKLSSNSNNNNNSSSPIGLTDSSAANTDEETDEANVMKRKLDAAKLTYFSDSDSENEEDENDDIINEDDLIKDSNQLDLRSRLIIPKSCEIPNGKKRRKACKDCTCGLKEIEEQEEAQQRSLQDSILGKMAQSATLEAIKIEERLKRQPVKFKDEDLAEIDFTVEGKTGGCGSCALGDAFRCDGCPYLGMPPFKPGEIVSIDSLGEDL</sequence>
<name>DRE2_PICST</name>
<gene>
    <name evidence="1" type="primary">DRE2</name>
    <name type="ORF">PICST_58064</name>
</gene>
<protein>
    <recommendedName>
        <fullName evidence="1">Fe-S cluster assembly protein DRE2</fullName>
    </recommendedName>
    <alternativeName>
        <fullName evidence="1">Anamorsin homolog</fullName>
    </alternativeName>
</protein>
<dbReference type="EMBL" id="CP000497">
    <property type="protein sequence ID" value="ABN65647.2"/>
    <property type="molecule type" value="Genomic_DNA"/>
</dbReference>
<dbReference type="RefSeq" id="XP_001383676.2">
    <property type="nucleotide sequence ID" value="XM_001383639.1"/>
</dbReference>
<dbReference type="SMR" id="A3LQZ8"/>
<dbReference type="FunCoup" id="A3LQZ8">
    <property type="interactions" value="172"/>
</dbReference>
<dbReference type="STRING" id="322104.A3LQZ8"/>
<dbReference type="GeneID" id="4838271"/>
<dbReference type="KEGG" id="pic:PICST_58064"/>
<dbReference type="eggNOG" id="KOG4020">
    <property type="taxonomic scope" value="Eukaryota"/>
</dbReference>
<dbReference type="HOGENOM" id="CLU_067152_0_0_1"/>
<dbReference type="InParanoid" id="A3LQZ8"/>
<dbReference type="OMA" id="TMITCGK"/>
<dbReference type="OrthoDB" id="311633at2759"/>
<dbReference type="Proteomes" id="UP000002258">
    <property type="component" value="Chromosome 3"/>
</dbReference>
<dbReference type="GO" id="GO:0097361">
    <property type="term" value="C:cytosolic [4Fe-4S] assembly targeting complex"/>
    <property type="evidence" value="ECO:0007669"/>
    <property type="project" value="EnsemblFungi"/>
</dbReference>
<dbReference type="GO" id="GO:0005758">
    <property type="term" value="C:mitochondrial intermembrane space"/>
    <property type="evidence" value="ECO:0007669"/>
    <property type="project" value="UniProtKB-SubCell"/>
</dbReference>
<dbReference type="GO" id="GO:0051537">
    <property type="term" value="F:2 iron, 2 sulfur cluster binding"/>
    <property type="evidence" value="ECO:0007669"/>
    <property type="project" value="UniProtKB-UniRule"/>
</dbReference>
<dbReference type="GO" id="GO:0051539">
    <property type="term" value="F:4 iron, 4 sulfur cluster binding"/>
    <property type="evidence" value="ECO:0007669"/>
    <property type="project" value="UniProtKB-KW"/>
</dbReference>
<dbReference type="GO" id="GO:0009055">
    <property type="term" value="F:electron transfer activity"/>
    <property type="evidence" value="ECO:0007669"/>
    <property type="project" value="UniProtKB-UniRule"/>
</dbReference>
<dbReference type="GO" id="GO:0046872">
    <property type="term" value="F:metal ion binding"/>
    <property type="evidence" value="ECO:0007669"/>
    <property type="project" value="UniProtKB-KW"/>
</dbReference>
<dbReference type="GO" id="GO:0034599">
    <property type="term" value="P:cellular response to oxidative stress"/>
    <property type="evidence" value="ECO:0007669"/>
    <property type="project" value="EnsemblFungi"/>
</dbReference>
<dbReference type="GO" id="GO:0016226">
    <property type="term" value="P:iron-sulfur cluster assembly"/>
    <property type="evidence" value="ECO:0007669"/>
    <property type="project" value="UniProtKB-UniRule"/>
</dbReference>
<dbReference type="GO" id="GO:1901299">
    <property type="term" value="P:negative regulation of hydrogen peroxide-mediated programmed cell death"/>
    <property type="evidence" value="ECO:0007669"/>
    <property type="project" value="EnsemblFungi"/>
</dbReference>
<dbReference type="GO" id="GO:0045019">
    <property type="term" value="P:negative regulation of nitric oxide biosynthetic process"/>
    <property type="evidence" value="ECO:0007669"/>
    <property type="project" value="EnsemblFungi"/>
</dbReference>
<dbReference type="Gene3D" id="3.40.50.11000">
    <property type="entry name" value="Fe-S cluster assembly protein Dre2, N-terminal domain"/>
    <property type="match status" value="1"/>
</dbReference>
<dbReference type="HAMAP" id="MF_03115">
    <property type="entry name" value="Anamorsin"/>
    <property type="match status" value="1"/>
</dbReference>
<dbReference type="InterPro" id="IPR007785">
    <property type="entry name" value="Anamorsin"/>
</dbReference>
<dbReference type="InterPro" id="IPR046408">
    <property type="entry name" value="CIAPIN1"/>
</dbReference>
<dbReference type="InterPro" id="IPR031838">
    <property type="entry name" value="Dre2_N"/>
</dbReference>
<dbReference type="PANTHER" id="PTHR13273">
    <property type="entry name" value="ANAMORSIN"/>
    <property type="match status" value="1"/>
</dbReference>
<dbReference type="PANTHER" id="PTHR13273:SF14">
    <property type="entry name" value="ANAMORSIN"/>
    <property type="match status" value="1"/>
</dbReference>
<dbReference type="Pfam" id="PF05093">
    <property type="entry name" value="CIAPIN1"/>
    <property type="match status" value="1"/>
</dbReference>
<dbReference type="Pfam" id="PF16803">
    <property type="entry name" value="DRE2_N"/>
    <property type="match status" value="1"/>
</dbReference>
<keyword id="KW-0001">2Fe-2S</keyword>
<keyword id="KW-0004">4Fe-4S</keyword>
<keyword id="KW-0963">Cytoplasm</keyword>
<keyword id="KW-0408">Iron</keyword>
<keyword id="KW-0411">Iron-sulfur</keyword>
<keyword id="KW-0479">Metal-binding</keyword>
<keyword id="KW-0496">Mitochondrion</keyword>
<keyword id="KW-1185">Reference proteome</keyword>
<evidence type="ECO:0000255" key="1">
    <source>
        <dbReference type="HAMAP-Rule" id="MF_03115"/>
    </source>
</evidence>
<evidence type="ECO:0000256" key="2">
    <source>
        <dbReference type="SAM" id="MobiDB-lite"/>
    </source>
</evidence>
<organism>
    <name type="scientific">Scheffersomyces stipitis (strain ATCC 58785 / CBS 6054 / NBRC 10063 / NRRL Y-11545)</name>
    <name type="common">Yeast</name>
    <name type="synonym">Pichia stipitis</name>
    <dbReference type="NCBI Taxonomy" id="322104"/>
    <lineage>
        <taxon>Eukaryota</taxon>
        <taxon>Fungi</taxon>
        <taxon>Dikarya</taxon>
        <taxon>Ascomycota</taxon>
        <taxon>Saccharomycotina</taxon>
        <taxon>Pichiomycetes</taxon>
        <taxon>Debaryomycetaceae</taxon>
        <taxon>Scheffersomyces</taxon>
    </lineage>
</organism>
<comment type="function">
    <text evidence="1">Component of the cytosolic iron-sulfur (Fe-S) protein assembly (CIA) machinery required for the maturation of extramitochondrial Fe-S proteins. Part of an electron transfer chain functioning in an early step of cytosolic Fe-S biogenesis, facilitating the de novo assembly of a [4Fe-4S] cluster on the scaffold complex CFD1-NBP35. Electrons are transferred to DRE2 from NADPH via the FAD- and FMN-containing protein TAH18. TAH18-DRE2 are also required for the assembly of the diferric tyrosyl radical cofactor of ribonucleotide reductase (RNR), probably by providing electrons for reduction during radical cofactor maturation in the catalytic small subunit RNR2.</text>
</comment>
<comment type="cofactor">
    <cofactor evidence="1">
        <name>[2Fe-2S] cluster</name>
        <dbReference type="ChEBI" id="CHEBI:190135"/>
    </cofactor>
</comment>
<comment type="cofactor">
    <cofactor evidence="1">
        <name>[4Fe-4S] cluster</name>
        <dbReference type="ChEBI" id="CHEBI:49883"/>
    </cofactor>
</comment>
<comment type="subunit">
    <text evidence="1">Monomer. Interacts with TAH18. Interacts with MIA40.</text>
</comment>
<comment type="subcellular location">
    <subcellularLocation>
        <location evidence="1">Cytoplasm</location>
    </subcellularLocation>
    <subcellularLocation>
        <location evidence="1">Mitochondrion intermembrane space</location>
    </subcellularLocation>
</comment>
<comment type="domain">
    <text evidence="1">The C-terminal domain binds 2 Fe-S clusters but is otherwise mostly in an intrinsically disordered conformation.</text>
</comment>
<comment type="domain">
    <text evidence="1">The N-terminal domain has structural similarity with S-adenosyl-L-methionine-dependent methyltransferases, but does not bind S-adenosyl-L-methionine. It is required for correct assembly of the 2 Fe-S clusters.</text>
</comment>
<comment type="domain">
    <text evidence="1">The twin Cx2C motifs are involved in the recognition by the mitochondrial MIA40-ERV1 disulfide relay system. The formation of 2 disulfide bonds in the Cx2C motifs through dithiol/disulfide exchange reactions effectively traps the protein in the mitochondrial intermembrane space.</text>
</comment>
<comment type="similarity">
    <text evidence="1">Belongs to the anamorsin family.</text>
</comment>